<organism>
    <name type="scientific">Burkholderia mallei (strain NCTC 10247)</name>
    <dbReference type="NCBI Taxonomy" id="320389"/>
    <lineage>
        <taxon>Bacteria</taxon>
        <taxon>Pseudomonadati</taxon>
        <taxon>Pseudomonadota</taxon>
        <taxon>Betaproteobacteria</taxon>
        <taxon>Burkholderiales</taxon>
        <taxon>Burkholderiaceae</taxon>
        <taxon>Burkholderia</taxon>
        <taxon>pseudomallei group</taxon>
    </lineage>
</organism>
<comment type="function">
    <text evidence="1">Specifically methylates guanosine-37 in various tRNAs.</text>
</comment>
<comment type="catalytic activity">
    <reaction evidence="1">
        <text>guanosine(37) in tRNA + S-adenosyl-L-methionine = N(1)-methylguanosine(37) in tRNA + S-adenosyl-L-homocysteine + H(+)</text>
        <dbReference type="Rhea" id="RHEA:36899"/>
        <dbReference type="Rhea" id="RHEA-COMP:10145"/>
        <dbReference type="Rhea" id="RHEA-COMP:10147"/>
        <dbReference type="ChEBI" id="CHEBI:15378"/>
        <dbReference type="ChEBI" id="CHEBI:57856"/>
        <dbReference type="ChEBI" id="CHEBI:59789"/>
        <dbReference type="ChEBI" id="CHEBI:73542"/>
        <dbReference type="ChEBI" id="CHEBI:74269"/>
        <dbReference type="EC" id="2.1.1.228"/>
    </reaction>
</comment>
<comment type="subunit">
    <text evidence="1">Homodimer.</text>
</comment>
<comment type="subcellular location">
    <subcellularLocation>
        <location evidence="1">Cytoplasm</location>
    </subcellularLocation>
</comment>
<comment type="similarity">
    <text evidence="1">Belongs to the RNA methyltransferase TrmD family.</text>
</comment>
<evidence type="ECO:0000255" key="1">
    <source>
        <dbReference type="HAMAP-Rule" id="MF_00605"/>
    </source>
</evidence>
<keyword id="KW-0963">Cytoplasm</keyword>
<keyword id="KW-0489">Methyltransferase</keyword>
<keyword id="KW-0949">S-adenosyl-L-methionine</keyword>
<keyword id="KW-0808">Transferase</keyword>
<keyword id="KW-0819">tRNA processing</keyword>
<sequence length="264" mass="29000">MDEATQSAIQFDVVTLFPEMFRALTDWGITSRAVKQGRFGLRTWNPRDFTTDNYRTVDDRPYGGGPGMVMLAKPLEAAIGAAKAAQAAQGVATSRVVMMSPQGAPLTHERVARMAAEPGVVLLCGRYEAIDQRLIDRCVDEELSLGDFVLSGGELPAMALMDAVVRLLPGVLNDAQSAVQDSFADGLLDCPHYTRPEEYEGVRVPDVLLGGHHAEIERWRRQEALRNTIAKRPDLIARARREKLLSRADEAWLASLAKEAKQAS</sequence>
<name>TRMD_BURM7</name>
<protein>
    <recommendedName>
        <fullName evidence="1">tRNA (guanine-N(1)-)-methyltransferase</fullName>
        <ecNumber evidence="1">2.1.1.228</ecNumber>
    </recommendedName>
    <alternativeName>
        <fullName evidence="1">M1G-methyltransferase</fullName>
    </alternativeName>
    <alternativeName>
        <fullName evidence="1">tRNA [GM37] methyltransferase</fullName>
    </alternativeName>
</protein>
<feature type="chain" id="PRO_1000006457" description="tRNA (guanine-N(1)-)-methyltransferase">
    <location>
        <begin position="1"/>
        <end position="264"/>
    </location>
</feature>
<feature type="binding site" evidence="1">
    <location>
        <position position="125"/>
    </location>
    <ligand>
        <name>S-adenosyl-L-methionine</name>
        <dbReference type="ChEBI" id="CHEBI:59789"/>
    </ligand>
</feature>
<feature type="binding site" evidence="1">
    <location>
        <begin position="145"/>
        <end position="150"/>
    </location>
    <ligand>
        <name>S-adenosyl-L-methionine</name>
        <dbReference type="ChEBI" id="CHEBI:59789"/>
    </ligand>
</feature>
<proteinExistence type="inferred from homology"/>
<gene>
    <name evidence="1" type="primary">trmD</name>
    <name type="ordered locus">BMA10247_0230</name>
</gene>
<accession>A3MHR9</accession>
<reference key="1">
    <citation type="journal article" date="2010" name="Genome Biol. Evol.">
        <title>Continuing evolution of Burkholderia mallei through genome reduction and large-scale rearrangements.</title>
        <authorList>
            <person name="Losada L."/>
            <person name="Ronning C.M."/>
            <person name="DeShazer D."/>
            <person name="Woods D."/>
            <person name="Fedorova N."/>
            <person name="Kim H.S."/>
            <person name="Shabalina S.A."/>
            <person name="Pearson T.R."/>
            <person name="Brinkac L."/>
            <person name="Tan P."/>
            <person name="Nandi T."/>
            <person name="Crabtree J."/>
            <person name="Badger J."/>
            <person name="Beckstrom-Sternberg S."/>
            <person name="Saqib M."/>
            <person name="Schutzer S.E."/>
            <person name="Keim P."/>
            <person name="Nierman W.C."/>
        </authorList>
    </citation>
    <scope>NUCLEOTIDE SEQUENCE [LARGE SCALE GENOMIC DNA]</scope>
    <source>
        <strain>NCTC 10247</strain>
    </source>
</reference>
<dbReference type="EC" id="2.1.1.228" evidence="1"/>
<dbReference type="EMBL" id="CP000548">
    <property type="protein sequence ID" value="ABO07305.1"/>
    <property type="molecule type" value="Genomic_DNA"/>
</dbReference>
<dbReference type="RefSeq" id="WP_004189914.1">
    <property type="nucleotide sequence ID" value="NZ_CP007802.1"/>
</dbReference>
<dbReference type="SMR" id="A3MHR9"/>
<dbReference type="GeneID" id="93061077"/>
<dbReference type="KEGG" id="bmaz:BM44_2762"/>
<dbReference type="KEGG" id="bmn:BMA10247_0230"/>
<dbReference type="PATRIC" id="fig|320389.8.peg.3119"/>
<dbReference type="GO" id="GO:0005829">
    <property type="term" value="C:cytosol"/>
    <property type="evidence" value="ECO:0007669"/>
    <property type="project" value="TreeGrafter"/>
</dbReference>
<dbReference type="GO" id="GO:0052906">
    <property type="term" value="F:tRNA (guanine(37)-N1)-methyltransferase activity"/>
    <property type="evidence" value="ECO:0007669"/>
    <property type="project" value="UniProtKB-UniRule"/>
</dbReference>
<dbReference type="GO" id="GO:0002939">
    <property type="term" value="P:tRNA N1-guanine methylation"/>
    <property type="evidence" value="ECO:0007669"/>
    <property type="project" value="TreeGrafter"/>
</dbReference>
<dbReference type="CDD" id="cd18080">
    <property type="entry name" value="TrmD-like"/>
    <property type="match status" value="1"/>
</dbReference>
<dbReference type="FunFam" id="1.10.1270.20:FF:000001">
    <property type="entry name" value="tRNA (guanine-N(1)-)-methyltransferase"/>
    <property type="match status" value="1"/>
</dbReference>
<dbReference type="FunFam" id="3.40.1280.10:FF:000001">
    <property type="entry name" value="tRNA (guanine-N(1)-)-methyltransferase"/>
    <property type="match status" value="1"/>
</dbReference>
<dbReference type="Gene3D" id="3.40.1280.10">
    <property type="match status" value="1"/>
</dbReference>
<dbReference type="Gene3D" id="1.10.1270.20">
    <property type="entry name" value="tRNA(m1g37)methyltransferase, domain 2"/>
    <property type="match status" value="1"/>
</dbReference>
<dbReference type="HAMAP" id="MF_00605">
    <property type="entry name" value="TrmD"/>
    <property type="match status" value="1"/>
</dbReference>
<dbReference type="InterPro" id="IPR029028">
    <property type="entry name" value="Alpha/beta_knot_MTases"/>
</dbReference>
<dbReference type="InterPro" id="IPR023148">
    <property type="entry name" value="tRNA_m1G_MeTrfase_C_sf"/>
</dbReference>
<dbReference type="InterPro" id="IPR002649">
    <property type="entry name" value="tRNA_m1G_MeTrfase_TrmD"/>
</dbReference>
<dbReference type="InterPro" id="IPR029026">
    <property type="entry name" value="tRNA_m1G_MTases_N"/>
</dbReference>
<dbReference type="InterPro" id="IPR016009">
    <property type="entry name" value="tRNA_MeTrfase_TRMD/TRM10"/>
</dbReference>
<dbReference type="NCBIfam" id="NF000648">
    <property type="entry name" value="PRK00026.1"/>
    <property type="match status" value="1"/>
</dbReference>
<dbReference type="NCBIfam" id="TIGR00088">
    <property type="entry name" value="trmD"/>
    <property type="match status" value="1"/>
</dbReference>
<dbReference type="PANTHER" id="PTHR46417">
    <property type="entry name" value="TRNA (GUANINE-N(1)-)-METHYLTRANSFERASE"/>
    <property type="match status" value="1"/>
</dbReference>
<dbReference type="PANTHER" id="PTHR46417:SF1">
    <property type="entry name" value="TRNA (GUANINE-N(1)-)-METHYLTRANSFERASE"/>
    <property type="match status" value="1"/>
</dbReference>
<dbReference type="Pfam" id="PF01746">
    <property type="entry name" value="tRNA_m1G_MT"/>
    <property type="match status" value="1"/>
</dbReference>
<dbReference type="PIRSF" id="PIRSF000386">
    <property type="entry name" value="tRNA_mtase"/>
    <property type="match status" value="1"/>
</dbReference>
<dbReference type="SUPFAM" id="SSF75217">
    <property type="entry name" value="alpha/beta knot"/>
    <property type="match status" value="1"/>
</dbReference>